<feature type="chain" id="PRO_1000120313" description="GMP synthase [glutamine-hydrolyzing]">
    <location>
        <begin position="1"/>
        <end position="526"/>
    </location>
</feature>
<feature type="domain" description="Glutamine amidotransferase type-1" evidence="1">
    <location>
        <begin position="9"/>
        <end position="208"/>
    </location>
</feature>
<feature type="domain" description="GMPS ATP-PPase" evidence="1">
    <location>
        <begin position="209"/>
        <end position="401"/>
    </location>
</feature>
<feature type="active site" description="Nucleophile" evidence="1">
    <location>
        <position position="86"/>
    </location>
</feature>
<feature type="active site" evidence="1">
    <location>
        <position position="182"/>
    </location>
</feature>
<feature type="active site" evidence="1">
    <location>
        <position position="184"/>
    </location>
</feature>
<feature type="binding site" evidence="1">
    <location>
        <begin position="236"/>
        <end position="242"/>
    </location>
    <ligand>
        <name>ATP</name>
        <dbReference type="ChEBI" id="CHEBI:30616"/>
    </ligand>
</feature>
<organism>
    <name type="scientific">Hahella chejuensis (strain KCTC 2396)</name>
    <dbReference type="NCBI Taxonomy" id="349521"/>
    <lineage>
        <taxon>Bacteria</taxon>
        <taxon>Pseudomonadati</taxon>
        <taxon>Pseudomonadota</taxon>
        <taxon>Gammaproteobacteria</taxon>
        <taxon>Oceanospirillales</taxon>
        <taxon>Hahellaceae</taxon>
        <taxon>Hahella</taxon>
    </lineage>
</organism>
<gene>
    <name evidence="1" type="primary">guaA</name>
    <name type="ordered locus">HCH_04942</name>
</gene>
<dbReference type="EC" id="6.3.5.2" evidence="1"/>
<dbReference type="EMBL" id="CP000155">
    <property type="protein sequence ID" value="ABC31631.1"/>
    <property type="molecule type" value="Genomic_DNA"/>
</dbReference>
<dbReference type="RefSeq" id="WP_011398696.1">
    <property type="nucleotide sequence ID" value="NC_007645.1"/>
</dbReference>
<dbReference type="SMR" id="Q2SCJ3"/>
<dbReference type="STRING" id="349521.HCH_04942"/>
<dbReference type="KEGG" id="hch:HCH_04942"/>
<dbReference type="eggNOG" id="COG0518">
    <property type="taxonomic scope" value="Bacteria"/>
</dbReference>
<dbReference type="eggNOG" id="COG0519">
    <property type="taxonomic scope" value="Bacteria"/>
</dbReference>
<dbReference type="HOGENOM" id="CLU_014340_0_5_6"/>
<dbReference type="OrthoDB" id="9802219at2"/>
<dbReference type="UniPathway" id="UPA00189">
    <property type="reaction ID" value="UER00296"/>
</dbReference>
<dbReference type="Proteomes" id="UP000000238">
    <property type="component" value="Chromosome"/>
</dbReference>
<dbReference type="GO" id="GO:0005829">
    <property type="term" value="C:cytosol"/>
    <property type="evidence" value="ECO:0007669"/>
    <property type="project" value="TreeGrafter"/>
</dbReference>
<dbReference type="GO" id="GO:0005524">
    <property type="term" value="F:ATP binding"/>
    <property type="evidence" value="ECO:0007669"/>
    <property type="project" value="UniProtKB-UniRule"/>
</dbReference>
<dbReference type="GO" id="GO:0003921">
    <property type="term" value="F:GMP synthase activity"/>
    <property type="evidence" value="ECO:0007669"/>
    <property type="project" value="InterPro"/>
</dbReference>
<dbReference type="CDD" id="cd01742">
    <property type="entry name" value="GATase1_GMP_Synthase"/>
    <property type="match status" value="1"/>
</dbReference>
<dbReference type="CDD" id="cd01997">
    <property type="entry name" value="GMP_synthase_C"/>
    <property type="match status" value="1"/>
</dbReference>
<dbReference type="FunFam" id="3.30.300.10:FF:000002">
    <property type="entry name" value="GMP synthase [glutamine-hydrolyzing]"/>
    <property type="match status" value="1"/>
</dbReference>
<dbReference type="FunFam" id="3.40.50.620:FF:000001">
    <property type="entry name" value="GMP synthase [glutamine-hydrolyzing]"/>
    <property type="match status" value="1"/>
</dbReference>
<dbReference type="FunFam" id="3.40.50.880:FF:000001">
    <property type="entry name" value="GMP synthase [glutamine-hydrolyzing]"/>
    <property type="match status" value="1"/>
</dbReference>
<dbReference type="Gene3D" id="3.30.300.10">
    <property type="match status" value="1"/>
</dbReference>
<dbReference type="Gene3D" id="3.40.50.880">
    <property type="match status" value="1"/>
</dbReference>
<dbReference type="Gene3D" id="3.40.50.620">
    <property type="entry name" value="HUPs"/>
    <property type="match status" value="1"/>
</dbReference>
<dbReference type="HAMAP" id="MF_00344">
    <property type="entry name" value="GMP_synthase"/>
    <property type="match status" value="1"/>
</dbReference>
<dbReference type="InterPro" id="IPR029062">
    <property type="entry name" value="Class_I_gatase-like"/>
</dbReference>
<dbReference type="InterPro" id="IPR017926">
    <property type="entry name" value="GATASE"/>
</dbReference>
<dbReference type="InterPro" id="IPR001674">
    <property type="entry name" value="GMP_synth_C"/>
</dbReference>
<dbReference type="InterPro" id="IPR004739">
    <property type="entry name" value="GMP_synth_GATase"/>
</dbReference>
<dbReference type="InterPro" id="IPR022955">
    <property type="entry name" value="GMP_synthase"/>
</dbReference>
<dbReference type="InterPro" id="IPR025777">
    <property type="entry name" value="GMPS_ATP_PPase_dom"/>
</dbReference>
<dbReference type="InterPro" id="IPR022310">
    <property type="entry name" value="NAD/GMP_synthase"/>
</dbReference>
<dbReference type="InterPro" id="IPR014729">
    <property type="entry name" value="Rossmann-like_a/b/a_fold"/>
</dbReference>
<dbReference type="NCBIfam" id="TIGR00884">
    <property type="entry name" value="guaA_Cterm"/>
    <property type="match status" value="1"/>
</dbReference>
<dbReference type="NCBIfam" id="TIGR00888">
    <property type="entry name" value="guaA_Nterm"/>
    <property type="match status" value="1"/>
</dbReference>
<dbReference type="NCBIfam" id="NF000848">
    <property type="entry name" value="PRK00074.1"/>
    <property type="match status" value="1"/>
</dbReference>
<dbReference type="PANTHER" id="PTHR11922:SF2">
    <property type="entry name" value="GMP SYNTHASE [GLUTAMINE-HYDROLYZING]"/>
    <property type="match status" value="1"/>
</dbReference>
<dbReference type="PANTHER" id="PTHR11922">
    <property type="entry name" value="GMP SYNTHASE-RELATED"/>
    <property type="match status" value="1"/>
</dbReference>
<dbReference type="Pfam" id="PF00117">
    <property type="entry name" value="GATase"/>
    <property type="match status" value="1"/>
</dbReference>
<dbReference type="Pfam" id="PF00958">
    <property type="entry name" value="GMP_synt_C"/>
    <property type="match status" value="1"/>
</dbReference>
<dbReference type="Pfam" id="PF02540">
    <property type="entry name" value="NAD_synthase"/>
    <property type="match status" value="1"/>
</dbReference>
<dbReference type="PRINTS" id="PR00096">
    <property type="entry name" value="GATASE"/>
</dbReference>
<dbReference type="SUPFAM" id="SSF52402">
    <property type="entry name" value="Adenine nucleotide alpha hydrolases-like"/>
    <property type="match status" value="1"/>
</dbReference>
<dbReference type="SUPFAM" id="SSF52317">
    <property type="entry name" value="Class I glutamine amidotransferase-like"/>
    <property type="match status" value="1"/>
</dbReference>
<dbReference type="SUPFAM" id="SSF54810">
    <property type="entry name" value="GMP synthetase C-terminal dimerisation domain"/>
    <property type="match status" value="1"/>
</dbReference>
<dbReference type="PROSITE" id="PS51273">
    <property type="entry name" value="GATASE_TYPE_1"/>
    <property type="match status" value="1"/>
</dbReference>
<dbReference type="PROSITE" id="PS51553">
    <property type="entry name" value="GMPS_ATP_PPASE"/>
    <property type="match status" value="1"/>
</dbReference>
<keyword id="KW-0067">ATP-binding</keyword>
<keyword id="KW-0315">Glutamine amidotransferase</keyword>
<keyword id="KW-0332">GMP biosynthesis</keyword>
<keyword id="KW-0436">Ligase</keyword>
<keyword id="KW-0547">Nucleotide-binding</keyword>
<keyword id="KW-0658">Purine biosynthesis</keyword>
<keyword id="KW-1185">Reference proteome</keyword>
<name>GUAA_HAHCH</name>
<reference key="1">
    <citation type="journal article" date="2005" name="Nucleic Acids Res.">
        <title>Genomic blueprint of Hahella chejuensis, a marine microbe producing an algicidal agent.</title>
        <authorList>
            <person name="Jeong H."/>
            <person name="Yim J.H."/>
            <person name="Lee C."/>
            <person name="Choi S.-H."/>
            <person name="Park Y.K."/>
            <person name="Yoon S.H."/>
            <person name="Hur C.-G."/>
            <person name="Kang H.-Y."/>
            <person name="Kim D."/>
            <person name="Lee H.H."/>
            <person name="Park K.H."/>
            <person name="Park S.-H."/>
            <person name="Park H.-S."/>
            <person name="Lee H.K."/>
            <person name="Oh T.K."/>
            <person name="Kim J.F."/>
        </authorList>
    </citation>
    <scope>NUCLEOTIDE SEQUENCE [LARGE SCALE GENOMIC DNA]</scope>
    <source>
        <strain>KCTC 2396</strain>
    </source>
</reference>
<evidence type="ECO:0000255" key="1">
    <source>
        <dbReference type="HAMAP-Rule" id="MF_00344"/>
    </source>
</evidence>
<accession>Q2SCJ3</accession>
<protein>
    <recommendedName>
        <fullName evidence="1">GMP synthase [glutamine-hydrolyzing]</fullName>
        <ecNumber evidence="1">6.3.5.2</ecNumber>
    </recommendedName>
    <alternativeName>
        <fullName evidence="1">GMP synthetase</fullName>
    </alternativeName>
    <alternativeName>
        <fullName evidence="1">Glutamine amidotransferase</fullName>
    </alternativeName>
</protein>
<proteinExistence type="inferred from homology"/>
<sequence>MSENIHSHRILILDFGSQYTQLIARRVREIGVYCEIYPFDMSEADIREFNPKGVILAGGPESVTELGSPRAPECLFNMDLPLLGICYGMQTMAEQMGGKVAGSNVREFGYAQVKIERSEDGLFENIKDHVAEDGKPLLDVWMSHGDKVVALPEGFVISASTPSAPIAAMQHESKPWFGVQFHPEVTHTLQGRRMLERFLVNICGCKQLWTPGRIIEDAITQVRNQVGQDKVLLGLSGGVDSSVVAALLHRAIGDQLTCVFVDNGLLRLHEGDQVMDMFAKNMGIKVVRANAQDQFLSKLAGENDPERKRKIIGHTFIEVFDAEAAKIKDVKWLAQGTIYPDVIESAAAKTGKAHVIKSHHNVGGLPEDMEMQLVEPLRELFKDEVRKIGLELGLPYDMVYRHPFPGPGLGVRILGEVKKEYADILREADAIFIEELHRAELYHKVSQAFAVFLPVKSVGVVGDARRYEYVIALRAVETIDFMTARWAHLPYELLEKISNRIINEISGVSRVVYDVSSKPPATIEWE</sequence>
<comment type="function">
    <text evidence="1">Catalyzes the synthesis of GMP from XMP.</text>
</comment>
<comment type="catalytic activity">
    <reaction evidence="1">
        <text>XMP + L-glutamine + ATP + H2O = GMP + L-glutamate + AMP + diphosphate + 2 H(+)</text>
        <dbReference type="Rhea" id="RHEA:11680"/>
        <dbReference type="ChEBI" id="CHEBI:15377"/>
        <dbReference type="ChEBI" id="CHEBI:15378"/>
        <dbReference type="ChEBI" id="CHEBI:29985"/>
        <dbReference type="ChEBI" id="CHEBI:30616"/>
        <dbReference type="ChEBI" id="CHEBI:33019"/>
        <dbReference type="ChEBI" id="CHEBI:57464"/>
        <dbReference type="ChEBI" id="CHEBI:58115"/>
        <dbReference type="ChEBI" id="CHEBI:58359"/>
        <dbReference type="ChEBI" id="CHEBI:456215"/>
        <dbReference type="EC" id="6.3.5.2"/>
    </reaction>
</comment>
<comment type="pathway">
    <text evidence="1">Purine metabolism; GMP biosynthesis; GMP from XMP (L-Gln route): step 1/1.</text>
</comment>
<comment type="subunit">
    <text evidence="1">Homodimer.</text>
</comment>